<protein>
    <recommendedName>
        <fullName evidence="4">MTOR-associated protein MEAK7</fullName>
        <shortName evidence="4">MEAK7</shortName>
    </recommendedName>
    <alternativeName>
        <fullName>TBC/LysM-associated domain-containing protein 1</fullName>
    </alternativeName>
    <alternativeName>
        <fullName>TLD domain-containing protein 1</fullName>
    </alternativeName>
</protein>
<dbReference type="EMBL" id="AJ720309">
    <property type="protein sequence ID" value="CAG31968.1"/>
    <property type="molecule type" value="mRNA"/>
</dbReference>
<dbReference type="RefSeq" id="NP_001025746.1">
    <property type="nucleotide sequence ID" value="NM_001030575.1"/>
</dbReference>
<dbReference type="SMR" id="Q5ZJX5"/>
<dbReference type="FunCoup" id="Q5ZJX5">
    <property type="interactions" value="504"/>
</dbReference>
<dbReference type="STRING" id="9031.ENSGALP00000054952"/>
<dbReference type="PaxDb" id="9031-ENSGALP00000028898"/>
<dbReference type="GeneID" id="415815"/>
<dbReference type="KEGG" id="gga:415815"/>
<dbReference type="CTD" id="415815"/>
<dbReference type="VEuPathDB" id="HostDB:geneid_415815"/>
<dbReference type="eggNOG" id="KOG2557">
    <property type="taxonomic scope" value="Eukaryota"/>
</dbReference>
<dbReference type="InParanoid" id="Q5ZJX5"/>
<dbReference type="OrthoDB" id="289228at2759"/>
<dbReference type="PhylomeDB" id="Q5ZJX5"/>
<dbReference type="PRO" id="PR:Q5ZJX5"/>
<dbReference type="Proteomes" id="UP000000539">
    <property type="component" value="Unassembled WGS sequence"/>
</dbReference>
<dbReference type="GO" id="GO:0005737">
    <property type="term" value="C:cytoplasm"/>
    <property type="evidence" value="ECO:0000250"/>
    <property type="project" value="UniProtKB"/>
</dbReference>
<dbReference type="GO" id="GO:0005765">
    <property type="term" value="C:lysosomal membrane"/>
    <property type="evidence" value="ECO:0000250"/>
    <property type="project" value="UniProtKB"/>
</dbReference>
<dbReference type="GO" id="GO:0016020">
    <property type="term" value="C:membrane"/>
    <property type="evidence" value="ECO:0000250"/>
    <property type="project" value="UniProtKB"/>
</dbReference>
<dbReference type="GO" id="GO:0005634">
    <property type="term" value="C:nucleus"/>
    <property type="evidence" value="ECO:0000318"/>
    <property type="project" value="GO_Central"/>
</dbReference>
<dbReference type="GO" id="GO:0150032">
    <property type="term" value="P:positive regulation of protein localization to lysosome"/>
    <property type="evidence" value="ECO:0000250"/>
    <property type="project" value="UniProtKB"/>
</dbReference>
<dbReference type="GO" id="GO:0030334">
    <property type="term" value="P:regulation of cell migration"/>
    <property type="evidence" value="ECO:0000250"/>
    <property type="project" value="UniProtKB"/>
</dbReference>
<dbReference type="GO" id="GO:0042127">
    <property type="term" value="P:regulation of cell population proliferation"/>
    <property type="evidence" value="ECO:0000250"/>
    <property type="project" value="UniProtKB"/>
</dbReference>
<dbReference type="GO" id="GO:0043200">
    <property type="term" value="P:response to amino acid"/>
    <property type="evidence" value="ECO:0000250"/>
    <property type="project" value="UniProtKB"/>
</dbReference>
<dbReference type="GO" id="GO:0032868">
    <property type="term" value="P:response to insulin"/>
    <property type="evidence" value="ECO:0000250"/>
    <property type="project" value="UniProtKB"/>
</dbReference>
<dbReference type="GO" id="GO:0031667">
    <property type="term" value="P:response to nutrient levels"/>
    <property type="evidence" value="ECO:0000250"/>
    <property type="project" value="UniProtKB"/>
</dbReference>
<dbReference type="GO" id="GO:0006979">
    <property type="term" value="P:response to oxidative stress"/>
    <property type="evidence" value="ECO:0000318"/>
    <property type="project" value="GO_Central"/>
</dbReference>
<dbReference type="GO" id="GO:0031929">
    <property type="term" value="P:TOR signaling"/>
    <property type="evidence" value="ECO:0000250"/>
    <property type="project" value="UniProtKB"/>
</dbReference>
<dbReference type="InterPro" id="IPR006571">
    <property type="entry name" value="TLDc_dom"/>
</dbReference>
<dbReference type="PANTHER" id="PTHR23354:SF131">
    <property type="entry name" value="MTOR-ASSOCIATED PROTEIN MEAK7"/>
    <property type="match status" value="1"/>
</dbReference>
<dbReference type="PANTHER" id="PTHR23354">
    <property type="entry name" value="NUCLEOLAR PROTEIN 7/ESTROGEN RECEPTOR COACTIVATOR-RELATED"/>
    <property type="match status" value="1"/>
</dbReference>
<dbReference type="Pfam" id="PF07534">
    <property type="entry name" value="TLD"/>
    <property type="match status" value="1"/>
</dbReference>
<dbReference type="SMART" id="SM00584">
    <property type="entry name" value="TLDc"/>
    <property type="match status" value="1"/>
</dbReference>
<dbReference type="PROSITE" id="PS51886">
    <property type="entry name" value="TLDC"/>
    <property type="match status" value="1"/>
</dbReference>
<reference key="1">
    <citation type="journal article" date="2005" name="Genome Biol.">
        <title>Full-length cDNAs from chicken bursal lymphocytes to facilitate gene function analysis.</title>
        <authorList>
            <person name="Caldwell R.B."/>
            <person name="Kierzek A.M."/>
            <person name="Arakawa H."/>
            <person name="Bezzubov Y."/>
            <person name="Zaim J."/>
            <person name="Fiedler P."/>
            <person name="Kutter S."/>
            <person name="Blagodatski A."/>
            <person name="Kostovska D."/>
            <person name="Koter M."/>
            <person name="Plachy J."/>
            <person name="Carninci P."/>
            <person name="Hayashizaki Y."/>
            <person name="Buerstedde J.-M."/>
        </authorList>
    </citation>
    <scope>NUCLEOTIDE SEQUENCE [LARGE SCALE MRNA]</scope>
    <source>
        <strain>CB</strain>
        <tissue>Bursa of Fabricius</tissue>
    </source>
</reference>
<organism>
    <name type="scientific">Gallus gallus</name>
    <name type="common">Chicken</name>
    <dbReference type="NCBI Taxonomy" id="9031"/>
    <lineage>
        <taxon>Eukaryota</taxon>
        <taxon>Metazoa</taxon>
        <taxon>Chordata</taxon>
        <taxon>Craniata</taxon>
        <taxon>Vertebrata</taxon>
        <taxon>Euteleostomi</taxon>
        <taxon>Archelosauria</taxon>
        <taxon>Archosauria</taxon>
        <taxon>Dinosauria</taxon>
        <taxon>Saurischia</taxon>
        <taxon>Theropoda</taxon>
        <taxon>Coelurosauria</taxon>
        <taxon>Aves</taxon>
        <taxon>Neognathae</taxon>
        <taxon>Galloanserae</taxon>
        <taxon>Galliformes</taxon>
        <taxon>Phasianidae</taxon>
        <taxon>Phasianinae</taxon>
        <taxon>Gallus</taxon>
    </lineage>
</organism>
<sequence>MGNAESNAYRNHLSRFLPEEQSDVDGLFDTLSGSSSSAAAKNGKAMKKTMTLEALKAYMREPLPEQMTVRLYNGMRSIDLTGKSSALSDHVAKEQFVIFMSNLLKGNADEKITIIMRMISTTEGPVKGKEIQEFTEDLIKSVVHVLSYRKELKGWTLENTRDSAGGIKALSSQLLSELKLADGTKAVSPQLMEMSFDRSVIEDWVYRVPQISAFLSVVLRQGLHVLHSLPDQTKDIVNLVPGCKGIKGRIVSLFDIPSIIYINSHLPAELQHKWRLLFSSKLHGESFSQLCAHIVNKGPCVVILKDTDGFIFGGFASHSWEVKPQFQGDNRCFLFSVFPSLAVYTYTGYNDHYMYLNHGQQTMPNGLGMGGQHDYFGLWVDSDYGKGHSKAKPRCTTYNSPQLSAKENFTLDALEVWAVGDMPESAETKGKKSILDVDPEAQALLEMTGKSRHSEGLREPIEDEDDDN</sequence>
<feature type="chain" id="PRO_0000313642" description="MTOR-associated protein MEAK7">
    <location>
        <begin position="1"/>
        <end position="468"/>
    </location>
</feature>
<feature type="domain" description="TLDc" evidence="2">
    <location>
        <begin position="252"/>
        <end position="420"/>
    </location>
</feature>
<feature type="region of interest" description="Disordered" evidence="3">
    <location>
        <begin position="445"/>
        <end position="468"/>
    </location>
</feature>
<name>MEAK7_CHICK</name>
<keyword id="KW-0963">Cytoplasm</keyword>
<keyword id="KW-0458">Lysosome</keyword>
<keyword id="KW-0472">Membrane</keyword>
<keyword id="KW-1185">Reference proteome</keyword>
<evidence type="ECO:0000250" key="1">
    <source>
        <dbReference type="UniProtKB" id="Q6P9B6"/>
    </source>
</evidence>
<evidence type="ECO:0000255" key="2">
    <source>
        <dbReference type="PROSITE-ProRule" id="PRU01234"/>
    </source>
</evidence>
<evidence type="ECO:0000256" key="3">
    <source>
        <dbReference type="SAM" id="MobiDB-lite"/>
    </source>
</evidence>
<evidence type="ECO:0000305" key="4"/>
<proteinExistence type="evidence at transcript level"/>
<accession>Q5ZJX5</accession>
<comment type="function">
    <text evidence="1">Activates an alternative mTOR signaling to regulate cell proliferation and migration.</text>
</comment>
<comment type="subcellular location">
    <subcellularLocation>
        <location evidence="1">Membrane</location>
    </subcellularLocation>
    <subcellularLocation>
        <location evidence="1">Cytoplasm</location>
    </subcellularLocation>
    <subcellularLocation>
        <location evidence="1">Lysosome</location>
    </subcellularLocation>
</comment>
<gene>
    <name type="primary">MEAK7</name>
    <name type="synonym">KIAA1609</name>
    <name type="synonym">TLDC1</name>
    <name type="ORF">RCJMB04_14k7</name>
</gene>